<organism>
    <name type="scientific">Mus musculus</name>
    <name type="common">Mouse</name>
    <dbReference type="NCBI Taxonomy" id="10090"/>
    <lineage>
        <taxon>Eukaryota</taxon>
        <taxon>Metazoa</taxon>
        <taxon>Chordata</taxon>
        <taxon>Craniata</taxon>
        <taxon>Vertebrata</taxon>
        <taxon>Euteleostomi</taxon>
        <taxon>Mammalia</taxon>
        <taxon>Eutheria</taxon>
        <taxon>Euarchontoglires</taxon>
        <taxon>Glires</taxon>
        <taxon>Rodentia</taxon>
        <taxon>Myomorpha</taxon>
        <taxon>Muroidea</taxon>
        <taxon>Muridae</taxon>
        <taxon>Murinae</taxon>
        <taxon>Mus</taxon>
        <taxon>Mus</taxon>
    </lineage>
</organism>
<accession>Q8CA71</accession>
<gene>
    <name type="primary">Shisa4</name>
    <name type="synonym">Tmem58</name>
</gene>
<dbReference type="EMBL" id="AK039457">
    <property type="protein sequence ID" value="BAC30354.1"/>
    <property type="molecule type" value="mRNA"/>
</dbReference>
<dbReference type="EMBL" id="BC044813">
    <property type="protein sequence ID" value="AAH44813.1"/>
    <property type="molecule type" value="mRNA"/>
</dbReference>
<dbReference type="CCDS" id="CCDS15319.1"/>
<dbReference type="RefSeq" id="NP_780468.1">
    <property type="nucleotide sequence ID" value="NM_175259.5"/>
</dbReference>
<dbReference type="RefSeq" id="XP_006530014.1">
    <property type="nucleotide sequence ID" value="XM_006529951.3"/>
</dbReference>
<dbReference type="FunCoup" id="Q8CA71">
    <property type="interactions" value="213"/>
</dbReference>
<dbReference type="STRING" id="10090.ENSMUSP00000046033"/>
<dbReference type="iPTMnet" id="Q8CA71"/>
<dbReference type="PhosphoSitePlus" id="Q8CA71"/>
<dbReference type="PaxDb" id="10090-ENSMUSP00000046033"/>
<dbReference type="PeptideAtlas" id="Q8CA71"/>
<dbReference type="ProteomicsDB" id="255424"/>
<dbReference type="Pumba" id="Q8CA71"/>
<dbReference type="Antibodypedia" id="65062">
    <property type="antibodies" value="59 antibodies from 20 providers"/>
</dbReference>
<dbReference type="DNASU" id="77552"/>
<dbReference type="Ensembl" id="ENSMUST00000041240.4">
    <property type="protein sequence ID" value="ENSMUSP00000046033.4"/>
    <property type="gene ID" value="ENSMUSG00000041889.8"/>
</dbReference>
<dbReference type="GeneID" id="77552"/>
<dbReference type="KEGG" id="mmu:77552"/>
<dbReference type="UCSC" id="uc007ctc.1">
    <property type="organism name" value="mouse"/>
</dbReference>
<dbReference type="AGR" id="MGI:1924802"/>
<dbReference type="CTD" id="149345"/>
<dbReference type="MGI" id="MGI:1924802">
    <property type="gene designation" value="Shisa4"/>
</dbReference>
<dbReference type="VEuPathDB" id="HostDB:ENSMUSG00000041889"/>
<dbReference type="eggNOG" id="ENOG502RY6V">
    <property type="taxonomic scope" value="Eukaryota"/>
</dbReference>
<dbReference type="GeneTree" id="ENSGT00730000111186"/>
<dbReference type="HOGENOM" id="CLU_110080_0_0_1"/>
<dbReference type="InParanoid" id="Q8CA71"/>
<dbReference type="OMA" id="DCYHRFC"/>
<dbReference type="OrthoDB" id="10010453at2759"/>
<dbReference type="PhylomeDB" id="Q8CA71"/>
<dbReference type="TreeFam" id="TF332572"/>
<dbReference type="BioGRID-ORCS" id="77552">
    <property type="hits" value="4 hits in 77 CRISPR screens"/>
</dbReference>
<dbReference type="PRO" id="PR:Q8CA71"/>
<dbReference type="Proteomes" id="UP000000589">
    <property type="component" value="Chromosome 1"/>
</dbReference>
<dbReference type="RNAct" id="Q8CA71">
    <property type="molecule type" value="protein"/>
</dbReference>
<dbReference type="Bgee" id="ENSMUSG00000041889">
    <property type="expression patterns" value="Expressed in triceps brachii and 202 other cell types or tissues"/>
</dbReference>
<dbReference type="GO" id="GO:0016020">
    <property type="term" value="C:membrane"/>
    <property type="evidence" value="ECO:0007669"/>
    <property type="project" value="UniProtKB-SubCell"/>
</dbReference>
<dbReference type="InterPro" id="IPR026910">
    <property type="entry name" value="Shisa"/>
</dbReference>
<dbReference type="InterPro" id="IPR053891">
    <property type="entry name" value="Shisa_N"/>
</dbReference>
<dbReference type="PANTHER" id="PTHR31395:SF5">
    <property type="entry name" value="PROTEIN SHISA-4"/>
    <property type="match status" value="1"/>
</dbReference>
<dbReference type="PANTHER" id="PTHR31395">
    <property type="entry name" value="SHISA"/>
    <property type="match status" value="1"/>
</dbReference>
<dbReference type="Pfam" id="PF13908">
    <property type="entry name" value="Shisa_N"/>
    <property type="match status" value="1"/>
</dbReference>
<evidence type="ECO:0000255" key="1"/>
<evidence type="ECO:0000305" key="2"/>
<reference key="1">
    <citation type="journal article" date="2005" name="Science">
        <title>The transcriptional landscape of the mammalian genome.</title>
        <authorList>
            <person name="Carninci P."/>
            <person name="Kasukawa T."/>
            <person name="Katayama S."/>
            <person name="Gough J."/>
            <person name="Frith M.C."/>
            <person name="Maeda N."/>
            <person name="Oyama R."/>
            <person name="Ravasi T."/>
            <person name="Lenhard B."/>
            <person name="Wells C."/>
            <person name="Kodzius R."/>
            <person name="Shimokawa K."/>
            <person name="Bajic V.B."/>
            <person name="Brenner S.E."/>
            <person name="Batalov S."/>
            <person name="Forrest A.R."/>
            <person name="Zavolan M."/>
            <person name="Davis M.J."/>
            <person name="Wilming L.G."/>
            <person name="Aidinis V."/>
            <person name="Allen J.E."/>
            <person name="Ambesi-Impiombato A."/>
            <person name="Apweiler R."/>
            <person name="Aturaliya R.N."/>
            <person name="Bailey T.L."/>
            <person name="Bansal M."/>
            <person name="Baxter L."/>
            <person name="Beisel K.W."/>
            <person name="Bersano T."/>
            <person name="Bono H."/>
            <person name="Chalk A.M."/>
            <person name="Chiu K.P."/>
            <person name="Choudhary V."/>
            <person name="Christoffels A."/>
            <person name="Clutterbuck D.R."/>
            <person name="Crowe M.L."/>
            <person name="Dalla E."/>
            <person name="Dalrymple B.P."/>
            <person name="de Bono B."/>
            <person name="Della Gatta G."/>
            <person name="di Bernardo D."/>
            <person name="Down T."/>
            <person name="Engstrom P."/>
            <person name="Fagiolini M."/>
            <person name="Faulkner G."/>
            <person name="Fletcher C.F."/>
            <person name="Fukushima T."/>
            <person name="Furuno M."/>
            <person name="Futaki S."/>
            <person name="Gariboldi M."/>
            <person name="Georgii-Hemming P."/>
            <person name="Gingeras T.R."/>
            <person name="Gojobori T."/>
            <person name="Green R.E."/>
            <person name="Gustincich S."/>
            <person name="Harbers M."/>
            <person name="Hayashi Y."/>
            <person name="Hensch T.K."/>
            <person name="Hirokawa N."/>
            <person name="Hill D."/>
            <person name="Huminiecki L."/>
            <person name="Iacono M."/>
            <person name="Ikeo K."/>
            <person name="Iwama A."/>
            <person name="Ishikawa T."/>
            <person name="Jakt M."/>
            <person name="Kanapin A."/>
            <person name="Katoh M."/>
            <person name="Kawasawa Y."/>
            <person name="Kelso J."/>
            <person name="Kitamura H."/>
            <person name="Kitano H."/>
            <person name="Kollias G."/>
            <person name="Krishnan S.P."/>
            <person name="Kruger A."/>
            <person name="Kummerfeld S.K."/>
            <person name="Kurochkin I.V."/>
            <person name="Lareau L.F."/>
            <person name="Lazarevic D."/>
            <person name="Lipovich L."/>
            <person name="Liu J."/>
            <person name="Liuni S."/>
            <person name="McWilliam S."/>
            <person name="Madan Babu M."/>
            <person name="Madera M."/>
            <person name="Marchionni L."/>
            <person name="Matsuda H."/>
            <person name="Matsuzawa S."/>
            <person name="Miki H."/>
            <person name="Mignone F."/>
            <person name="Miyake S."/>
            <person name="Morris K."/>
            <person name="Mottagui-Tabar S."/>
            <person name="Mulder N."/>
            <person name="Nakano N."/>
            <person name="Nakauchi H."/>
            <person name="Ng P."/>
            <person name="Nilsson R."/>
            <person name="Nishiguchi S."/>
            <person name="Nishikawa S."/>
            <person name="Nori F."/>
            <person name="Ohara O."/>
            <person name="Okazaki Y."/>
            <person name="Orlando V."/>
            <person name="Pang K.C."/>
            <person name="Pavan W.J."/>
            <person name="Pavesi G."/>
            <person name="Pesole G."/>
            <person name="Petrovsky N."/>
            <person name="Piazza S."/>
            <person name="Reed J."/>
            <person name="Reid J.F."/>
            <person name="Ring B.Z."/>
            <person name="Ringwald M."/>
            <person name="Rost B."/>
            <person name="Ruan Y."/>
            <person name="Salzberg S.L."/>
            <person name="Sandelin A."/>
            <person name="Schneider C."/>
            <person name="Schoenbach C."/>
            <person name="Sekiguchi K."/>
            <person name="Semple C.A."/>
            <person name="Seno S."/>
            <person name="Sessa L."/>
            <person name="Sheng Y."/>
            <person name="Shibata Y."/>
            <person name="Shimada H."/>
            <person name="Shimada K."/>
            <person name="Silva D."/>
            <person name="Sinclair B."/>
            <person name="Sperling S."/>
            <person name="Stupka E."/>
            <person name="Sugiura K."/>
            <person name="Sultana R."/>
            <person name="Takenaka Y."/>
            <person name="Taki K."/>
            <person name="Tammoja K."/>
            <person name="Tan S.L."/>
            <person name="Tang S."/>
            <person name="Taylor M.S."/>
            <person name="Tegner J."/>
            <person name="Teichmann S.A."/>
            <person name="Ueda H.R."/>
            <person name="van Nimwegen E."/>
            <person name="Verardo R."/>
            <person name="Wei C.L."/>
            <person name="Yagi K."/>
            <person name="Yamanishi H."/>
            <person name="Zabarovsky E."/>
            <person name="Zhu S."/>
            <person name="Zimmer A."/>
            <person name="Hide W."/>
            <person name="Bult C."/>
            <person name="Grimmond S.M."/>
            <person name="Teasdale R.D."/>
            <person name="Liu E.T."/>
            <person name="Brusic V."/>
            <person name="Quackenbush J."/>
            <person name="Wahlestedt C."/>
            <person name="Mattick J.S."/>
            <person name="Hume D.A."/>
            <person name="Kai C."/>
            <person name="Sasaki D."/>
            <person name="Tomaru Y."/>
            <person name="Fukuda S."/>
            <person name="Kanamori-Katayama M."/>
            <person name="Suzuki M."/>
            <person name="Aoki J."/>
            <person name="Arakawa T."/>
            <person name="Iida J."/>
            <person name="Imamura K."/>
            <person name="Itoh M."/>
            <person name="Kato T."/>
            <person name="Kawaji H."/>
            <person name="Kawagashira N."/>
            <person name="Kawashima T."/>
            <person name="Kojima M."/>
            <person name="Kondo S."/>
            <person name="Konno H."/>
            <person name="Nakano K."/>
            <person name="Ninomiya N."/>
            <person name="Nishio T."/>
            <person name="Okada M."/>
            <person name="Plessy C."/>
            <person name="Shibata K."/>
            <person name="Shiraki T."/>
            <person name="Suzuki S."/>
            <person name="Tagami M."/>
            <person name="Waki K."/>
            <person name="Watahiki A."/>
            <person name="Okamura-Oho Y."/>
            <person name="Suzuki H."/>
            <person name="Kawai J."/>
            <person name="Hayashizaki Y."/>
        </authorList>
    </citation>
    <scope>NUCLEOTIDE SEQUENCE [LARGE SCALE MRNA]</scope>
    <source>
        <strain>C57BL/6J</strain>
        <tissue>Spinal cord</tissue>
    </source>
</reference>
<reference key="2">
    <citation type="journal article" date="2004" name="Genome Res.">
        <title>The status, quality, and expansion of the NIH full-length cDNA project: the Mammalian Gene Collection (MGC).</title>
        <authorList>
            <consortium name="The MGC Project Team"/>
        </authorList>
    </citation>
    <scope>NUCLEOTIDE SEQUENCE [LARGE SCALE MRNA]</scope>
    <source>
        <strain>FVB/N</strain>
        <tissue>Mammary tumor</tissue>
    </source>
</reference>
<reference key="3">
    <citation type="journal article" date="2010" name="Cell">
        <title>A tissue-specific atlas of mouse protein phosphorylation and expression.</title>
        <authorList>
            <person name="Huttlin E.L."/>
            <person name="Jedrychowski M.P."/>
            <person name="Elias J.E."/>
            <person name="Goswami T."/>
            <person name="Rad R."/>
            <person name="Beausoleil S.A."/>
            <person name="Villen J."/>
            <person name="Haas W."/>
            <person name="Sowa M.E."/>
            <person name="Gygi S.P."/>
        </authorList>
    </citation>
    <scope>IDENTIFICATION BY MASS SPECTROMETRY [LARGE SCALE ANALYSIS]</scope>
    <source>
        <tissue>Brain</tissue>
    </source>
</reference>
<keyword id="KW-0472">Membrane</keyword>
<keyword id="KW-1185">Reference proteome</keyword>
<keyword id="KW-0732">Signal</keyword>
<keyword id="KW-0812">Transmembrane</keyword>
<keyword id="KW-1133">Transmembrane helix</keyword>
<sequence>MPPAGPRGTAPLAAVVLLVLGAPLALASEDCLWYLDRNGSWHPGFDCEFFTFCCGTCYQRYCCRDLTLLITERQQKHCLAFSPKTIAGIASAVILFVAVVATTICCFLCSCCYLYRRRQQLQSTFEGQEIPMTGIPMQPVYQYPPDPKAGPAPPQPGFMYPPSGPAPQYPLYPAGPPIYNPAAPPPYMPPQPSYPGA</sequence>
<name>SHSA4_MOUSE</name>
<protein>
    <recommendedName>
        <fullName>Protein shisa-4</fullName>
    </recommendedName>
    <alternativeName>
        <fullName>Transmembrane protein 58</fullName>
    </alternativeName>
</protein>
<proteinExistence type="evidence at protein level"/>
<comment type="subcellular location">
    <subcellularLocation>
        <location evidence="2">Membrane</location>
        <topology evidence="2">Single-pass type I membrane protein</topology>
    </subcellularLocation>
</comment>
<comment type="similarity">
    <text evidence="2">Belongs to the shisa family.</text>
</comment>
<feature type="signal peptide" evidence="1">
    <location>
        <begin position="1"/>
        <end position="27"/>
    </location>
</feature>
<feature type="chain" id="PRO_0000254091" description="Protein shisa-4">
    <location>
        <begin position="28"/>
        <end position="197"/>
    </location>
</feature>
<feature type="topological domain" description="Extracellular" evidence="1">
    <location>
        <begin position="28"/>
        <end position="87"/>
    </location>
</feature>
<feature type="transmembrane region" description="Helical" evidence="1">
    <location>
        <begin position="88"/>
        <end position="108"/>
    </location>
</feature>
<feature type="topological domain" description="Cytoplasmic" evidence="1">
    <location>
        <begin position="109"/>
        <end position="197"/>
    </location>
</feature>